<keyword id="KW-0067">ATP-binding</keyword>
<keyword id="KW-0963">Cytoplasm</keyword>
<keyword id="KW-0324">Glycolysis</keyword>
<keyword id="KW-0418">Kinase</keyword>
<keyword id="KW-0460">Magnesium</keyword>
<keyword id="KW-0479">Metal-binding</keyword>
<keyword id="KW-0547">Nucleotide-binding</keyword>
<keyword id="KW-1185">Reference proteome</keyword>
<keyword id="KW-0808">Transferase</keyword>
<dbReference type="EC" id="2.7.1.11" evidence="1"/>
<dbReference type="EMBL" id="AL939108">
    <property type="protein sequence ID" value="CAC01496.1"/>
    <property type="molecule type" value="Genomic_DNA"/>
</dbReference>
<dbReference type="RefSeq" id="NP_625503.1">
    <property type="nucleotide sequence ID" value="NC_003888.3"/>
</dbReference>
<dbReference type="RefSeq" id="WP_003977617.1">
    <property type="nucleotide sequence ID" value="NZ_VNID01000006.1"/>
</dbReference>
<dbReference type="SMR" id="Q9FC99"/>
<dbReference type="FunCoup" id="Q9FC99">
    <property type="interactions" value="244"/>
</dbReference>
<dbReference type="STRING" id="100226.gene:17758797"/>
<dbReference type="PaxDb" id="100226-SCO1214"/>
<dbReference type="KEGG" id="sco:SCO1214"/>
<dbReference type="PATRIC" id="fig|100226.15.peg.1213"/>
<dbReference type="eggNOG" id="COG0205">
    <property type="taxonomic scope" value="Bacteria"/>
</dbReference>
<dbReference type="HOGENOM" id="CLU_020655_0_0_11"/>
<dbReference type="InParanoid" id="Q9FC99"/>
<dbReference type="OrthoDB" id="9802503at2"/>
<dbReference type="PhylomeDB" id="Q9FC99"/>
<dbReference type="BRENDA" id="2.7.1.11">
    <property type="organism ID" value="5998"/>
</dbReference>
<dbReference type="UniPathway" id="UPA00109">
    <property type="reaction ID" value="UER00182"/>
</dbReference>
<dbReference type="Proteomes" id="UP000001973">
    <property type="component" value="Chromosome"/>
</dbReference>
<dbReference type="GO" id="GO:0005945">
    <property type="term" value="C:6-phosphofructokinase complex"/>
    <property type="evidence" value="ECO:0000318"/>
    <property type="project" value="GO_Central"/>
</dbReference>
<dbReference type="GO" id="GO:0003872">
    <property type="term" value="F:6-phosphofructokinase activity"/>
    <property type="evidence" value="ECO:0000318"/>
    <property type="project" value="GO_Central"/>
</dbReference>
<dbReference type="GO" id="GO:0005524">
    <property type="term" value="F:ATP binding"/>
    <property type="evidence" value="ECO:0007669"/>
    <property type="project" value="UniProtKB-KW"/>
</dbReference>
<dbReference type="GO" id="GO:0047334">
    <property type="term" value="F:diphosphate-fructose-6-phosphate 1-phosphotransferase activity"/>
    <property type="evidence" value="ECO:0007669"/>
    <property type="project" value="InterPro"/>
</dbReference>
<dbReference type="GO" id="GO:0070095">
    <property type="term" value="F:fructose-6-phosphate binding"/>
    <property type="evidence" value="ECO:0000318"/>
    <property type="project" value="GO_Central"/>
</dbReference>
<dbReference type="GO" id="GO:0046872">
    <property type="term" value="F:metal ion binding"/>
    <property type="evidence" value="ECO:0007669"/>
    <property type="project" value="UniProtKB-KW"/>
</dbReference>
<dbReference type="GO" id="GO:0061621">
    <property type="term" value="P:canonical glycolysis"/>
    <property type="evidence" value="ECO:0000318"/>
    <property type="project" value="GO_Central"/>
</dbReference>
<dbReference type="GO" id="GO:0030388">
    <property type="term" value="P:fructose 1,6-bisphosphate metabolic process"/>
    <property type="evidence" value="ECO:0000318"/>
    <property type="project" value="GO_Central"/>
</dbReference>
<dbReference type="GO" id="GO:0006002">
    <property type="term" value="P:fructose 6-phosphate metabolic process"/>
    <property type="evidence" value="ECO:0000318"/>
    <property type="project" value="GO_Central"/>
</dbReference>
<dbReference type="FunFam" id="3.40.50.450:FF:000006">
    <property type="entry name" value="ATP-dependent 6-phosphofructokinase"/>
    <property type="match status" value="1"/>
</dbReference>
<dbReference type="FunFam" id="3.40.50.460:FF:000005">
    <property type="entry name" value="ATP-dependent 6-phosphofructokinase"/>
    <property type="match status" value="1"/>
</dbReference>
<dbReference type="Gene3D" id="3.40.50.450">
    <property type="match status" value="1"/>
</dbReference>
<dbReference type="Gene3D" id="3.40.50.460">
    <property type="entry name" value="Phosphofructokinase domain"/>
    <property type="match status" value="1"/>
</dbReference>
<dbReference type="HAMAP" id="MF_01976">
    <property type="entry name" value="Phosphofructokinase_III"/>
    <property type="match status" value="1"/>
</dbReference>
<dbReference type="InterPro" id="IPR022953">
    <property type="entry name" value="ATP_PFK"/>
</dbReference>
<dbReference type="InterPro" id="IPR012003">
    <property type="entry name" value="ATP_PFK_prok-type"/>
</dbReference>
<dbReference type="InterPro" id="IPR015912">
    <property type="entry name" value="Phosphofructokinase_CS"/>
</dbReference>
<dbReference type="InterPro" id="IPR000023">
    <property type="entry name" value="Phosphofructokinase_dom"/>
</dbReference>
<dbReference type="InterPro" id="IPR012829">
    <property type="entry name" value="Phosphofructokinase_III"/>
</dbReference>
<dbReference type="InterPro" id="IPR035966">
    <property type="entry name" value="PKF_sf"/>
</dbReference>
<dbReference type="NCBIfam" id="TIGR02483">
    <property type="entry name" value="PFK_mixed"/>
    <property type="match status" value="1"/>
</dbReference>
<dbReference type="NCBIfam" id="NF002872">
    <property type="entry name" value="PRK03202.1"/>
    <property type="match status" value="1"/>
</dbReference>
<dbReference type="PANTHER" id="PTHR13697:SF52">
    <property type="entry name" value="ATP-DEPENDENT 6-PHOSPHOFRUCTOKINASE 3"/>
    <property type="match status" value="1"/>
</dbReference>
<dbReference type="PANTHER" id="PTHR13697">
    <property type="entry name" value="PHOSPHOFRUCTOKINASE"/>
    <property type="match status" value="1"/>
</dbReference>
<dbReference type="Pfam" id="PF00365">
    <property type="entry name" value="PFK"/>
    <property type="match status" value="1"/>
</dbReference>
<dbReference type="PIRSF" id="PIRSF000532">
    <property type="entry name" value="ATP_PFK_prok"/>
    <property type="match status" value="1"/>
</dbReference>
<dbReference type="PRINTS" id="PR00476">
    <property type="entry name" value="PHFRCTKINASE"/>
</dbReference>
<dbReference type="SUPFAM" id="SSF53784">
    <property type="entry name" value="Phosphofructokinase"/>
    <property type="match status" value="1"/>
</dbReference>
<dbReference type="PROSITE" id="PS00433">
    <property type="entry name" value="PHOSPHOFRUCTOKINASE"/>
    <property type="match status" value="1"/>
</dbReference>
<accession>Q9FC99</accession>
<feature type="chain" id="PRO_0000111988" description="ATP-dependent 6-phosphofructokinase 3">
    <location>
        <begin position="1"/>
        <end position="341"/>
    </location>
</feature>
<feature type="active site" description="Proton acceptor" evidence="1">
    <location>
        <position position="127"/>
    </location>
</feature>
<feature type="binding site" evidence="1">
    <location>
        <position position="10"/>
    </location>
    <ligand>
        <name>ATP</name>
        <dbReference type="ChEBI" id="CHEBI:30616"/>
    </ligand>
</feature>
<feature type="binding site" evidence="1">
    <location>
        <begin position="72"/>
        <end position="73"/>
    </location>
    <ligand>
        <name>ATP</name>
        <dbReference type="ChEBI" id="CHEBI:30616"/>
    </ligand>
</feature>
<feature type="binding site" evidence="1">
    <location>
        <begin position="102"/>
        <end position="105"/>
    </location>
    <ligand>
        <name>ATP</name>
        <dbReference type="ChEBI" id="CHEBI:30616"/>
    </ligand>
</feature>
<feature type="binding site" evidence="1">
    <location>
        <position position="103"/>
    </location>
    <ligand>
        <name>Mg(2+)</name>
        <dbReference type="ChEBI" id="CHEBI:18420"/>
        <note>catalytic</note>
    </ligand>
</feature>
<feature type="binding site" description="in other chain" evidence="1">
    <location>
        <begin position="125"/>
        <end position="127"/>
    </location>
    <ligand>
        <name>substrate</name>
        <note>ligand shared between dimeric partners</note>
    </ligand>
</feature>
<feature type="binding site" evidence="1">
    <location>
        <position position="162"/>
    </location>
    <ligand>
        <name>substrate</name>
        <note>ligand shared between dimeric partners</note>
    </ligand>
</feature>
<feature type="binding site" description="in other chain" evidence="1">
    <location>
        <begin position="169"/>
        <end position="171"/>
    </location>
    <ligand>
        <name>substrate</name>
        <note>ligand shared between dimeric partners</note>
    </ligand>
</feature>
<feature type="binding site" description="in other chain" evidence="1">
    <location>
        <position position="222"/>
    </location>
    <ligand>
        <name>substrate</name>
        <note>ligand shared between dimeric partners</note>
    </ligand>
</feature>
<feature type="binding site" evidence="1">
    <location>
        <position position="266"/>
    </location>
    <ligand>
        <name>substrate</name>
        <note>ligand shared between dimeric partners</note>
    </ligand>
</feature>
<feature type="binding site" description="in other chain" evidence="1">
    <location>
        <begin position="272"/>
        <end position="275"/>
    </location>
    <ligand>
        <name>substrate</name>
        <note>ligand shared between dimeric partners</note>
    </ligand>
</feature>
<feature type="site" description="Important for substrate specificity; cannot use PPi as phosphoryl donor" evidence="1">
    <location>
        <position position="104"/>
    </location>
</feature>
<gene>
    <name evidence="1" type="primary">pfkA3</name>
    <name type="synonym">pfk3</name>
    <name type="ordered locus">SCO1214</name>
    <name type="ORF">2SCG58.14</name>
</gene>
<evidence type="ECO:0000255" key="1">
    <source>
        <dbReference type="HAMAP-Rule" id="MF_01976"/>
    </source>
</evidence>
<evidence type="ECO:0000269" key="2">
    <source>
    </source>
</evidence>
<reference key="1">
    <citation type="journal article" date="2002" name="Nature">
        <title>Complete genome sequence of the model actinomycete Streptomyces coelicolor A3(2).</title>
        <authorList>
            <person name="Bentley S.D."/>
            <person name="Chater K.F."/>
            <person name="Cerdeno-Tarraga A.-M."/>
            <person name="Challis G.L."/>
            <person name="Thomson N.R."/>
            <person name="James K.D."/>
            <person name="Harris D.E."/>
            <person name="Quail M.A."/>
            <person name="Kieser H."/>
            <person name="Harper D."/>
            <person name="Bateman A."/>
            <person name="Brown S."/>
            <person name="Chandra G."/>
            <person name="Chen C.W."/>
            <person name="Collins M."/>
            <person name="Cronin A."/>
            <person name="Fraser A."/>
            <person name="Goble A."/>
            <person name="Hidalgo J."/>
            <person name="Hornsby T."/>
            <person name="Howarth S."/>
            <person name="Huang C.-H."/>
            <person name="Kieser T."/>
            <person name="Larke L."/>
            <person name="Murphy L.D."/>
            <person name="Oliver K."/>
            <person name="O'Neil S."/>
            <person name="Rabbinowitsch E."/>
            <person name="Rajandream M.A."/>
            <person name="Rutherford K.M."/>
            <person name="Rutter S."/>
            <person name="Seeger K."/>
            <person name="Saunders D."/>
            <person name="Sharp S."/>
            <person name="Squares R."/>
            <person name="Squares S."/>
            <person name="Taylor K."/>
            <person name="Warren T."/>
            <person name="Wietzorrek A."/>
            <person name="Woodward J.R."/>
            <person name="Barrell B.G."/>
            <person name="Parkhill J."/>
            <person name="Hopwood D.A."/>
        </authorList>
    </citation>
    <scope>NUCLEOTIDE SEQUENCE [LARGE SCALE GENOMIC DNA]</scope>
    <source>
        <strain>ATCC BAA-471 / A3(2) / M145</strain>
    </source>
</reference>
<reference key="2">
    <citation type="journal article" date="2008" name="J. Biol. Chem.">
        <title>Antibiotic overproduction in Streptomyces coelicolor A3(2) mediated by phosphofructokinase deletion.</title>
        <authorList>
            <person name="Borodina I."/>
            <person name="Siebring J."/>
            <person name="Zhang J."/>
            <person name="Smith C.P."/>
            <person name="van Keulen G."/>
            <person name="Dijkhuizen L."/>
            <person name="Nielsen J."/>
        </authorList>
    </citation>
    <scope>DISRUPTION PHENOTYPE</scope>
</reference>
<name>PFKA3_STRCO</name>
<organism>
    <name type="scientific">Streptomyces coelicolor (strain ATCC BAA-471 / A3(2) / M145)</name>
    <dbReference type="NCBI Taxonomy" id="100226"/>
    <lineage>
        <taxon>Bacteria</taxon>
        <taxon>Bacillati</taxon>
        <taxon>Actinomycetota</taxon>
        <taxon>Actinomycetes</taxon>
        <taxon>Kitasatosporales</taxon>
        <taxon>Streptomycetaceae</taxon>
        <taxon>Streptomyces</taxon>
        <taxon>Streptomyces albidoflavus group</taxon>
    </lineage>
</organism>
<proteinExistence type="inferred from homology"/>
<comment type="function">
    <text evidence="1">Catalyzes the phosphorylation of D-fructose 6-phosphate to fructose 1,6-bisphosphate by ATP, the first committing step of glycolysis.</text>
</comment>
<comment type="catalytic activity">
    <reaction evidence="1">
        <text>beta-D-fructose 6-phosphate + ATP = beta-D-fructose 1,6-bisphosphate + ADP + H(+)</text>
        <dbReference type="Rhea" id="RHEA:16109"/>
        <dbReference type="ChEBI" id="CHEBI:15378"/>
        <dbReference type="ChEBI" id="CHEBI:30616"/>
        <dbReference type="ChEBI" id="CHEBI:32966"/>
        <dbReference type="ChEBI" id="CHEBI:57634"/>
        <dbReference type="ChEBI" id="CHEBI:456216"/>
        <dbReference type="EC" id="2.7.1.11"/>
    </reaction>
</comment>
<comment type="cofactor">
    <cofactor evidence="1">
        <name>Mg(2+)</name>
        <dbReference type="ChEBI" id="CHEBI:18420"/>
    </cofactor>
</comment>
<comment type="pathway">
    <text evidence="1">Carbohydrate degradation; glycolysis; D-glyceraldehyde 3-phosphate and glycerone phosphate from D-glucose: step 3/4.</text>
</comment>
<comment type="subunit">
    <text evidence="1">Homodimer or homotetramer.</text>
</comment>
<comment type="subcellular location">
    <subcellularLocation>
        <location evidence="1">Cytoplasm</location>
    </subcellularLocation>
</comment>
<comment type="disruption phenotype">
    <text evidence="2">No effect.</text>
</comment>
<comment type="similarity">
    <text evidence="1">Belongs to the phosphofructokinase type A (PFKA) family. Mixed-substrate PFK group III subfamily.</text>
</comment>
<sequence length="341" mass="36432">MRIGVLTSGGDCPGLNAVIRSVVHRAVVDHGDEVIGFRDGWKGLLECDYLKLDLDAVGGILARGGTILGSSRVRPEHLRDGVERARGHVEELGLDAIIPIGGEGTLKAARLLSDNGLPIVGVPKTIDNDIAVTDVTFGFDTAVTVATEALDRLKTTAESHQRVLIVEVMGRHTGWIALHSGMAAGAHAVVVPERPFDIDELTAKVGERFSAGKRFAIVVAAEGAKPKAGTMDFDEGGKDVYGHERFAGIARQLSIELEERLGKEARPVILGHVQRGGTPTAYDRVLATRFGWHAVEAVHRGEFGKMTALRGTDIEMVSLADAVESLKTVPDARYAEAECVL</sequence>
<protein>
    <recommendedName>
        <fullName evidence="1">ATP-dependent 6-phosphofructokinase 3</fullName>
        <shortName evidence="1">ATP-PFK 3</shortName>
        <shortName evidence="1">Phosphofructokinase 3</shortName>
        <ecNumber evidence="1">2.7.1.11</ecNumber>
    </recommendedName>
    <alternativeName>
        <fullName evidence="1">Phosphohexokinase 3</fullName>
    </alternativeName>
</protein>